<organism>
    <name type="scientific">Paracidovorax citrulli (strain AAC00-1)</name>
    <name type="common">Acidovorax citrulli</name>
    <dbReference type="NCBI Taxonomy" id="397945"/>
    <lineage>
        <taxon>Bacteria</taxon>
        <taxon>Pseudomonadati</taxon>
        <taxon>Pseudomonadota</taxon>
        <taxon>Betaproteobacteria</taxon>
        <taxon>Burkholderiales</taxon>
        <taxon>Comamonadaceae</taxon>
        <taxon>Paracidovorax</taxon>
    </lineage>
</organism>
<dbReference type="EMBL" id="CP000512">
    <property type="protein sequence ID" value="ABM33413.1"/>
    <property type="molecule type" value="Genomic_DNA"/>
</dbReference>
<dbReference type="RefSeq" id="WP_011795934.1">
    <property type="nucleotide sequence ID" value="NC_008752.1"/>
</dbReference>
<dbReference type="SMR" id="A1TR25"/>
<dbReference type="STRING" id="397945.Aave_2845"/>
<dbReference type="KEGG" id="aav:Aave_2845"/>
<dbReference type="eggNOG" id="COG1742">
    <property type="taxonomic scope" value="Bacteria"/>
</dbReference>
<dbReference type="HOGENOM" id="CLU_117653_2_0_4"/>
<dbReference type="OrthoDB" id="123240at2"/>
<dbReference type="Proteomes" id="UP000002596">
    <property type="component" value="Chromosome"/>
</dbReference>
<dbReference type="GO" id="GO:0005886">
    <property type="term" value="C:plasma membrane"/>
    <property type="evidence" value="ECO:0007669"/>
    <property type="project" value="UniProtKB-SubCell"/>
</dbReference>
<dbReference type="HAMAP" id="MF_00010">
    <property type="entry name" value="UPF0060"/>
    <property type="match status" value="1"/>
</dbReference>
<dbReference type="InterPro" id="IPR003844">
    <property type="entry name" value="UPF0060"/>
</dbReference>
<dbReference type="NCBIfam" id="NF002586">
    <property type="entry name" value="PRK02237.1"/>
    <property type="match status" value="1"/>
</dbReference>
<dbReference type="PANTHER" id="PTHR36116">
    <property type="entry name" value="UPF0060 MEMBRANE PROTEIN YNFA"/>
    <property type="match status" value="1"/>
</dbReference>
<dbReference type="PANTHER" id="PTHR36116:SF1">
    <property type="entry name" value="UPF0060 MEMBRANE PROTEIN YNFA"/>
    <property type="match status" value="1"/>
</dbReference>
<dbReference type="Pfam" id="PF02694">
    <property type="entry name" value="UPF0060"/>
    <property type="match status" value="1"/>
</dbReference>
<dbReference type="SUPFAM" id="SSF103481">
    <property type="entry name" value="Multidrug resistance efflux transporter EmrE"/>
    <property type="match status" value="1"/>
</dbReference>
<sequence>MVELKTFLLYAVTALAEIAGCYLPWLWLRQDRSAWLLVPGAACLALFAWLLTLHPAAAGRVYAAYGGVYVAVALGWLWAVDGIRPDRWDLAGAAVTLAGMAIIAFAPRGAA</sequence>
<protein>
    <recommendedName>
        <fullName evidence="1">UPF0060 membrane protein Aave_2845</fullName>
    </recommendedName>
</protein>
<accession>A1TR25</accession>
<name>Y2845_PARC0</name>
<evidence type="ECO:0000255" key="1">
    <source>
        <dbReference type="HAMAP-Rule" id="MF_00010"/>
    </source>
</evidence>
<reference key="1">
    <citation type="submission" date="2006-12" db="EMBL/GenBank/DDBJ databases">
        <title>Complete sequence of Acidovorax avenae subsp. citrulli AAC00-1.</title>
        <authorList>
            <person name="Copeland A."/>
            <person name="Lucas S."/>
            <person name="Lapidus A."/>
            <person name="Barry K."/>
            <person name="Detter J.C."/>
            <person name="Glavina del Rio T."/>
            <person name="Dalin E."/>
            <person name="Tice H."/>
            <person name="Pitluck S."/>
            <person name="Kiss H."/>
            <person name="Brettin T."/>
            <person name="Bruce D."/>
            <person name="Han C."/>
            <person name="Tapia R."/>
            <person name="Gilna P."/>
            <person name="Schmutz J."/>
            <person name="Larimer F."/>
            <person name="Land M."/>
            <person name="Hauser L."/>
            <person name="Kyrpides N."/>
            <person name="Kim E."/>
            <person name="Stahl D."/>
            <person name="Richardson P."/>
        </authorList>
    </citation>
    <scope>NUCLEOTIDE SEQUENCE [LARGE SCALE GENOMIC DNA]</scope>
    <source>
        <strain>AAC00-1</strain>
    </source>
</reference>
<proteinExistence type="inferred from homology"/>
<gene>
    <name type="ordered locus">Aave_2845</name>
</gene>
<keyword id="KW-0997">Cell inner membrane</keyword>
<keyword id="KW-1003">Cell membrane</keyword>
<keyword id="KW-0472">Membrane</keyword>
<keyword id="KW-0812">Transmembrane</keyword>
<keyword id="KW-1133">Transmembrane helix</keyword>
<comment type="subcellular location">
    <subcellularLocation>
        <location evidence="1">Cell inner membrane</location>
        <topology evidence="1">Multi-pass membrane protein</topology>
    </subcellularLocation>
</comment>
<comment type="similarity">
    <text evidence="1">Belongs to the UPF0060 family.</text>
</comment>
<feature type="chain" id="PRO_0000282197" description="UPF0060 membrane protein Aave_2845">
    <location>
        <begin position="1"/>
        <end position="111"/>
    </location>
</feature>
<feature type="transmembrane region" description="Helical" evidence="1">
    <location>
        <begin position="7"/>
        <end position="27"/>
    </location>
</feature>
<feature type="transmembrane region" description="Helical" evidence="1">
    <location>
        <begin position="33"/>
        <end position="53"/>
    </location>
</feature>
<feature type="transmembrane region" description="Helical" evidence="1">
    <location>
        <begin position="63"/>
        <end position="83"/>
    </location>
</feature>
<feature type="transmembrane region" description="Helical" evidence="1">
    <location>
        <begin position="90"/>
        <end position="110"/>
    </location>
</feature>